<accession>Q72I96</accession>
<organism>
    <name type="scientific">Thermus thermophilus (strain ATCC BAA-163 / DSM 7039 / HB27)</name>
    <dbReference type="NCBI Taxonomy" id="262724"/>
    <lineage>
        <taxon>Bacteria</taxon>
        <taxon>Thermotogati</taxon>
        <taxon>Deinococcota</taxon>
        <taxon>Deinococci</taxon>
        <taxon>Thermales</taxon>
        <taxon>Thermaceae</taxon>
        <taxon>Thermus</taxon>
    </lineage>
</organism>
<dbReference type="EMBL" id="AE017221">
    <property type="protein sequence ID" value="AAS81578.1"/>
    <property type="molecule type" value="Genomic_DNA"/>
</dbReference>
<dbReference type="RefSeq" id="WP_008633233.1">
    <property type="nucleotide sequence ID" value="NC_005835.1"/>
</dbReference>
<dbReference type="BMRB" id="Q72I96"/>
<dbReference type="SMR" id="Q72I96"/>
<dbReference type="KEGG" id="tth:TT_C1236"/>
<dbReference type="eggNOG" id="COG0353">
    <property type="taxonomic scope" value="Bacteria"/>
</dbReference>
<dbReference type="HOGENOM" id="CLU_060739_1_0_0"/>
<dbReference type="OrthoDB" id="9802672at2"/>
<dbReference type="Proteomes" id="UP000000592">
    <property type="component" value="Chromosome"/>
</dbReference>
<dbReference type="GO" id="GO:0003677">
    <property type="term" value="F:DNA binding"/>
    <property type="evidence" value="ECO:0007669"/>
    <property type="project" value="UniProtKB-UniRule"/>
</dbReference>
<dbReference type="GO" id="GO:0008270">
    <property type="term" value="F:zinc ion binding"/>
    <property type="evidence" value="ECO:0007669"/>
    <property type="project" value="UniProtKB-KW"/>
</dbReference>
<dbReference type="GO" id="GO:0006310">
    <property type="term" value="P:DNA recombination"/>
    <property type="evidence" value="ECO:0007669"/>
    <property type="project" value="UniProtKB-UniRule"/>
</dbReference>
<dbReference type="GO" id="GO:0006281">
    <property type="term" value="P:DNA repair"/>
    <property type="evidence" value="ECO:0007669"/>
    <property type="project" value="UniProtKB-UniRule"/>
</dbReference>
<dbReference type="CDD" id="cd01025">
    <property type="entry name" value="TOPRIM_recR"/>
    <property type="match status" value="1"/>
</dbReference>
<dbReference type="Gene3D" id="3.30.60.80">
    <property type="match status" value="1"/>
</dbReference>
<dbReference type="Gene3D" id="3.40.1360.10">
    <property type="match status" value="1"/>
</dbReference>
<dbReference type="Gene3D" id="6.10.250.240">
    <property type="match status" value="1"/>
</dbReference>
<dbReference type="Gene3D" id="1.10.8.420">
    <property type="entry name" value="RecR Domain 1"/>
    <property type="match status" value="1"/>
</dbReference>
<dbReference type="HAMAP" id="MF_00017">
    <property type="entry name" value="RecR"/>
    <property type="match status" value="1"/>
</dbReference>
<dbReference type="InterPro" id="IPR000093">
    <property type="entry name" value="DNA_Rcmb_RecR"/>
</dbReference>
<dbReference type="InterPro" id="IPR003583">
    <property type="entry name" value="Hlx-hairpin-Hlx_DNA-bd_motif"/>
</dbReference>
<dbReference type="InterPro" id="IPR023627">
    <property type="entry name" value="Rcmb_RecR"/>
</dbReference>
<dbReference type="InterPro" id="IPR015967">
    <property type="entry name" value="Rcmb_RecR_Znf"/>
</dbReference>
<dbReference type="InterPro" id="IPR006171">
    <property type="entry name" value="TOPRIM_dom"/>
</dbReference>
<dbReference type="InterPro" id="IPR034137">
    <property type="entry name" value="TOPRIM_RecR"/>
</dbReference>
<dbReference type="NCBIfam" id="TIGR00615">
    <property type="entry name" value="recR"/>
    <property type="match status" value="1"/>
</dbReference>
<dbReference type="PANTHER" id="PTHR30446">
    <property type="entry name" value="RECOMBINATION PROTEIN RECR"/>
    <property type="match status" value="1"/>
</dbReference>
<dbReference type="PANTHER" id="PTHR30446:SF0">
    <property type="entry name" value="RECOMBINATION PROTEIN RECR"/>
    <property type="match status" value="1"/>
</dbReference>
<dbReference type="Pfam" id="PF21175">
    <property type="entry name" value="RecR_C"/>
    <property type="match status" value="1"/>
</dbReference>
<dbReference type="Pfam" id="PF21176">
    <property type="entry name" value="RecR_HhH"/>
    <property type="match status" value="1"/>
</dbReference>
<dbReference type="Pfam" id="PF02132">
    <property type="entry name" value="RecR_ZnF"/>
    <property type="match status" value="1"/>
</dbReference>
<dbReference type="Pfam" id="PF13662">
    <property type="entry name" value="Toprim_4"/>
    <property type="match status" value="1"/>
</dbReference>
<dbReference type="SMART" id="SM00278">
    <property type="entry name" value="HhH1"/>
    <property type="match status" value="1"/>
</dbReference>
<dbReference type="SMART" id="SM00493">
    <property type="entry name" value="TOPRIM"/>
    <property type="match status" value="1"/>
</dbReference>
<dbReference type="SUPFAM" id="SSF111304">
    <property type="entry name" value="Recombination protein RecR"/>
    <property type="match status" value="1"/>
</dbReference>
<dbReference type="PROSITE" id="PS01300">
    <property type="entry name" value="RECR"/>
    <property type="match status" value="1"/>
</dbReference>
<dbReference type="PROSITE" id="PS50880">
    <property type="entry name" value="TOPRIM"/>
    <property type="match status" value="1"/>
</dbReference>
<comment type="function">
    <text evidence="1">May play a role in DNA repair. It seems to be involved in an RecBC-independent recombinational process of DNA repair. It may act with RecF and RecO.</text>
</comment>
<comment type="similarity">
    <text evidence="1">Belongs to the RecR family.</text>
</comment>
<keyword id="KW-0227">DNA damage</keyword>
<keyword id="KW-0233">DNA recombination</keyword>
<keyword id="KW-0234">DNA repair</keyword>
<keyword id="KW-0479">Metal-binding</keyword>
<keyword id="KW-0862">Zinc</keyword>
<keyword id="KW-0863">Zinc-finger</keyword>
<gene>
    <name evidence="1" type="primary">recR</name>
    <name type="ordered locus">TT_C1236</name>
</gene>
<sequence length="194" mass="21207">MRYPESLLKLTRALSRLPGIGPKTAQRLALHLAFHKEEAEALAEALEGLKRVRACRECGNLAEGELCPICQDEDRDRSLLAVVESVADLYALERSGEFRGLYHVLGGALNPLEGIGPKELNLEGLFRRLEGVEEVVLATSMTVEGEATALYLAEELKKRGVRVTRPAYGLPVGGSLEYADEVTLGRALEGRRPV</sequence>
<proteinExistence type="inferred from homology"/>
<name>RECR_THET2</name>
<protein>
    <recommendedName>
        <fullName evidence="1">Recombination protein RecR</fullName>
    </recommendedName>
</protein>
<reference key="1">
    <citation type="journal article" date="2004" name="Nat. Biotechnol.">
        <title>The genome sequence of the extreme thermophile Thermus thermophilus.</title>
        <authorList>
            <person name="Henne A."/>
            <person name="Brueggemann H."/>
            <person name="Raasch C."/>
            <person name="Wiezer A."/>
            <person name="Hartsch T."/>
            <person name="Liesegang H."/>
            <person name="Johann A."/>
            <person name="Lienard T."/>
            <person name="Gohl O."/>
            <person name="Martinez-Arias R."/>
            <person name="Jacobi C."/>
            <person name="Starkuviene V."/>
            <person name="Schlenczeck S."/>
            <person name="Dencker S."/>
            <person name="Huber R."/>
            <person name="Klenk H.-P."/>
            <person name="Kramer W."/>
            <person name="Merkl R."/>
            <person name="Gottschalk G."/>
            <person name="Fritz H.-J."/>
        </authorList>
    </citation>
    <scope>NUCLEOTIDE SEQUENCE [LARGE SCALE GENOMIC DNA]</scope>
    <source>
        <strain>ATCC BAA-163 / DSM 7039 / HB27</strain>
    </source>
</reference>
<evidence type="ECO:0000255" key="1">
    <source>
        <dbReference type="HAMAP-Rule" id="MF_00017"/>
    </source>
</evidence>
<feature type="chain" id="PRO_0000190412" description="Recombination protein RecR">
    <location>
        <begin position="1"/>
        <end position="194"/>
    </location>
</feature>
<feature type="domain" description="Toprim" evidence="1">
    <location>
        <begin position="78"/>
        <end position="171"/>
    </location>
</feature>
<feature type="zinc finger region" description="C4-type" evidence="1">
    <location>
        <begin position="55"/>
        <end position="70"/>
    </location>
</feature>